<comment type="function">
    <text evidence="1">Core subunit of the mitochondrial membrane respiratory chain NADH dehydrogenase (Complex I) that is believed to belong to the minimal assembly required for catalysis. Complex I functions in the transfer of electrons from NADH to the respiratory chain. The immediate electron acceptor for the enzyme is believed to be ubiquinone (By similarity).</text>
</comment>
<comment type="catalytic activity">
    <reaction>
        <text>a ubiquinone + NADH + 5 H(+)(in) = a ubiquinol + NAD(+) + 4 H(+)(out)</text>
        <dbReference type="Rhea" id="RHEA:29091"/>
        <dbReference type="Rhea" id="RHEA-COMP:9565"/>
        <dbReference type="Rhea" id="RHEA-COMP:9566"/>
        <dbReference type="ChEBI" id="CHEBI:15378"/>
        <dbReference type="ChEBI" id="CHEBI:16389"/>
        <dbReference type="ChEBI" id="CHEBI:17976"/>
        <dbReference type="ChEBI" id="CHEBI:57540"/>
        <dbReference type="ChEBI" id="CHEBI:57945"/>
        <dbReference type="EC" id="7.1.1.2"/>
    </reaction>
</comment>
<comment type="subcellular location">
    <subcellularLocation>
        <location evidence="1">Mitochondrion membrane</location>
        <topology evidence="1">Multi-pass membrane protein</topology>
    </subcellularLocation>
</comment>
<comment type="similarity">
    <text evidence="3">Belongs to the complex I subunit 3 family.</text>
</comment>
<proteinExistence type="inferred from homology"/>
<sequence length="117" mass="13427">MLSIILIASLILTIVTIVMFLASILSKKALIDREKSSPFECGFDPKSSSRLPFSLRFFLITIIFLIFDVEIALILPMIIIMKFSNIMIWTTTSIIFILILLIGLYHEWNQGMLNWSN</sequence>
<feature type="chain" id="PRO_0000117737" description="NADH-ubiquinone oxidoreductase chain 3">
    <location>
        <begin position="1"/>
        <end position="117"/>
    </location>
</feature>
<feature type="transmembrane region" description="Helical" evidence="2">
    <location>
        <begin position="4"/>
        <end position="24"/>
    </location>
</feature>
<feature type="transmembrane region" description="Helical" evidence="2">
    <location>
        <begin position="60"/>
        <end position="80"/>
    </location>
</feature>
<feature type="transmembrane region" description="Helical" evidence="2">
    <location>
        <begin position="86"/>
        <end position="106"/>
    </location>
</feature>
<protein>
    <recommendedName>
        <fullName>NADH-ubiquinone oxidoreductase chain 3</fullName>
        <ecNumber>7.1.1.2</ecNumber>
    </recommendedName>
    <alternativeName>
        <fullName>NADH dehydrogenase subunit 3</fullName>
    </alternativeName>
</protein>
<accession>P51940</accession>
<dbReference type="EC" id="7.1.1.2"/>
<dbReference type="EMBL" id="X65129">
    <property type="protein sequence ID" value="CAA46258.1"/>
    <property type="molecule type" value="Genomic_DNA"/>
</dbReference>
<dbReference type="SMR" id="P51940"/>
<dbReference type="EnsemblMetazoa" id="GeneID_43561552_t1">
    <property type="protein sequence ID" value="YP_009725124.1"/>
    <property type="gene ID" value="GeneID_43561552"/>
</dbReference>
<dbReference type="GO" id="GO:0031966">
    <property type="term" value="C:mitochondrial membrane"/>
    <property type="evidence" value="ECO:0007669"/>
    <property type="project" value="UniProtKB-SubCell"/>
</dbReference>
<dbReference type="GO" id="GO:0030964">
    <property type="term" value="C:NADH dehydrogenase complex"/>
    <property type="evidence" value="ECO:0007669"/>
    <property type="project" value="TreeGrafter"/>
</dbReference>
<dbReference type="GO" id="GO:0008137">
    <property type="term" value="F:NADH dehydrogenase (ubiquinone) activity"/>
    <property type="evidence" value="ECO:0007669"/>
    <property type="project" value="UniProtKB-EC"/>
</dbReference>
<dbReference type="FunFam" id="1.20.58.1610:FF:000004">
    <property type="entry name" value="NADH-quinone oxidoreductase subunit A"/>
    <property type="match status" value="1"/>
</dbReference>
<dbReference type="Gene3D" id="1.20.58.1610">
    <property type="entry name" value="NADH:ubiquinone/plastoquinone oxidoreductase, chain 3"/>
    <property type="match status" value="1"/>
</dbReference>
<dbReference type="InterPro" id="IPR000440">
    <property type="entry name" value="NADH_UbQ/plastoQ_OxRdtase_su3"/>
</dbReference>
<dbReference type="InterPro" id="IPR038430">
    <property type="entry name" value="NDAH_ubi_oxred_su3_sf"/>
</dbReference>
<dbReference type="PANTHER" id="PTHR11058">
    <property type="entry name" value="NADH-UBIQUINONE OXIDOREDUCTASE CHAIN 3"/>
    <property type="match status" value="1"/>
</dbReference>
<dbReference type="PANTHER" id="PTHR11058:SF9">
    <property type="entry name" value="NADH-UBIQUINONE OXIDOREDUCTASE CHAIN 3"/>
    <property type="match status" value="1"/>
</dbReference>
<dbReference type="Pfam" id="PF00507">
    <property type="entry name" value="Oxidored_q4"/>
    <property type="match status" value="1"/>
</dbReference>
<keyword id="KW-0249">Electron transport</keyword>
<keyword id="KW-0472">Membrane</keyword>
<keyword id="KW-0496">Mitochondrion</keyword>
<keyword id="KW-0520">NAD</keyword>
<keyword id="KW-0679">Respiratory chain</keyword>
<keyword id="KW-1278">Translocase</keyword>
<keyword id="KW-0812">Transmembrane</keyword>
<keyword id="KW-1133">Transmembrane helix</keyword>
<keyword id="KW-0813">Transport</keyword>
<keyword id="KW-0830">Ubiquinone</keyword>
<organism>
    <name type="scientific">Drosophila subobscura</name>
    <name type="common">Fruit fly</name>
    <dbReference type="NCBI Taxonomy" id="7241"/>
    <lineage>
        <taxon>Eukaryota</taxon>
        <taxon>Metazoa</taxon>
        <taxon>Ecdysozoa</taxon>
        <taxon>Arthropoda</taxon>
        <taxon>Hexapoda</taxon>
        <taxon>Insecta</taxon>
        <taxon>Pterygota</taxon>
        <taxon>Neoptera</taxon>
        <taxon>Endopterygota</taxon>
        <taxon>Diptera</taxon>
        <taxon>Brachycera</taxon>
        <taxon>Muscomorpha</taxon>
        <taxon>Ephydroidea</taxon>
        <taxon>Drosophilidae</taxon>
        <taxon>Drosophila</taxon>
        <taxon>Sophophora</taxon>
    </lineage>
</organism>
<evidence type="ECO:0000250" key="1"/>
<evidence type="ECO:0000255" key="2"/>
<evidence type="ECO:0000305" key="3"/>
<gene>
    <name type="primary">mt:ND3</name>
    <name type="synonym">ND3</name>
</gene>
<name>NU3M_DROSU</name>
<reference key="1">
    <citation type="journal article" date="1992" name="Proc. Natl. Acad. Sci. U.S.A.">
        <title>Stable heteroplasmy for a large-scale deletion in the coding region of Drosophila subobscura mitochondrial DNA.</title>
        <authorList>
            <person name="Volz-Lingenhohl A."/>
            <person name="Solignac M."/>
            <person name="Sperlich D."/>
        </authorList>
    </citation>
    <scope>NUCLEOTIDE SEQUENCE [GENOMIC DNA]</scope>
    <source>
        <strain>SSP. TUE 3</strain>
    </source>
</reference>
<geneLocation type="mitochondrion"/>